<protein>
    <recommendedName>
        <fullName evidence="1">Ribosome maturation factor RimP</fullName>
    </recommendedName>
</protein>
<name>RIMP_HELPJ</name>
<keyword id="KW-0963">Cytoplasm</keyword>
<keyword id="KW-0690">Ribosome biogenesis</keyword>
<accession>Q9ZM44</accession>
<gene>
    <name evidence="1" type="primary">rimP</name>
    <name type="ordered locus">jhp_0379</name>
</gene>
<proteinExistence type="inferred from homology"/>
<feature type="chain" id="PRO_0000181879" description="Ribosome maturation factor RimP">
    <location>
        <begin position="1"/>
        <end position="146"/>
    </location>
</feature>
<organism>
    <name type="scientific">Helicobacter pylori (strain J99 / ATCC 700824)</name>
    <name type="common">Campylobacter pylori J99</name>
    <dbReference type="NCBI Taxonomy" id="85963"/>
    <lineage>
        <taxon>Bacteria</taxon>
        <taxon>Pseudomonadati</taxon>
        <taxon>Campylobacterota</taxon>
        <taxon>Epsilonproteobacteria</taxon>
        <taxon>Campylobacterales</taxon>
        <taxon>Helicobacteraceae</taxon>
        <taxon>Helicobacter</taxon>
    </lineage>
</organism>
<comment type="function">
    <text evidence="1">Required for maturation of 30S ribosomal subunits.</text>
</comment>
<comment type="subcellular location">
    <subcellularLocation>
        <location evidence="1">Cytoplasm</location>
    </subcellularLocation>
</comment>
<comment type="similarity">
    <text evidence="1">Belongs to the RimP family.</text>
</comment>
<sequence>MTKKIEEKIEGVIESLGYLLYDVSLVKENEQHVLRVSLKNPNGAVSLDICQQVSEIISPLLDVCDFIQDAYILEVSSMGLERTLKTPKHFKLSLGEKVEVKLINKESFQAVLKDANDLSADFELDNHAIKSVEYKDLKKVKTLFEW</sequence>
<dbReference type="EMBL" id="AE001439">
    <property type="protein sequence ID" value="AAD05958.1"/>
    <property type="molecule type" value="Genomic_DNA"/>
</dbReference>
<dbReference type="PIR" id="G71940">
    <property type="entry name" value="G71940"/>
</dbReference>
<dbReference type="RefSeq" id="WP_000162243.1">
    <property type="nucleotide sequence ID" value="NC_000921.1"/>
</dbReference>
<dbReference type="SMR" id="Q9ZM44"/>
<dbReference type="KEGG" id="hpj:jhp_0379"/>
<dbReference type="PATRIC" id="fig|85963.30.peg.632"/>
<dbReference type="eggNOG" id="COG0779">
    <property type="taxonomic scope" value="Bacteria"/>
</dbReference>
<dbReference type="Proteomes" id="UP000000804">
    <property type="component" value="Chromosome"/>
</dbReference>
<dbReference type="GO" id="GO:0005829">
    <property type="term" value="C:cytosol"/>
    <property type="evidence" value="ECO:0007669"/>
    <property type="project" value="TreeGrafter"/>
</dbReference>
<dbReference type="GO" id="GO:0000028">
    <property type="term" value="P:ribosomal small subunit assembly"/>
    <property type="evidence" value="ECO:0007669"/>
    <property type="project" value="TreeGrafter"/>
</dbReference>
<dbReference type="GO" id="GO:0006412">
    <property type="term" value="P:translation"/>
    <property type="evidence" value="ECO:0007669"/>
    <property type="project" value="TreeGrafter"/>
</dbReference>
<dbReference type="CDD" id="cd01734">
    <property type="entry name" value="YlxS_C"/>
    <property type="match status" value="1"/>
</dbReference>
<dbReference type="FunFam" id="3.30.300.70:FF:000005">
    <property type="entry name" value="Ribosome maturation factor RimP"/>
    <property type="match status" value="1"/>
</dbReference>
<dbReference type="Gene3D" id="3.30.300.70">
    <property type="entry name" value="RimP-like superfamily, N-terminal"/>
    <property type="match status" value="1"/>
</dbReference>
<dbReference type="HAMAP" id="MF_01077">
    <property type="entry name" value="RimP"/>
    <property type="match status" value="1"/>
</dbReference>
<dbReference type="InterPro" id="IPR003728">
    <property type="entry name" value="Ribosome_maturation_RimP"/>
</dbReference>
<dbReference type="InterPro" id="IPR028998">
    <property type="entry name" value="RimP_C"/>
</dbReference>
<dbReference type="InterPro" id="IPR028989">
    <property type="entry name" value="RimP_N"/>
</dbReference>
<dbReference type="InterPro" id="IPR035956">
    <property type="entry name" value="RimP_N_sf"/>
</dbReference>
<dbReference type="PANTHER" id="PTHR33867">
    <property type="entry name" value="RIBOSOME MATURATION FACTOR RIMP"/>
    <property type="match status" value="1"/>
</dbReference>
<dbReference type="PANTHER" id="PTHR33867:SF1">
    <property type="entry name" value="RIBOSOME MATURATION FACTOR RIMP"/>
    <property type="match status" value="1"/>
</dbReference>
<dbReference type="Pfam" id="PF17384">
    <property type="entry name" value="DUF150_C"/>
    <property type="match status" value="1"/>
</dbReference>
<dbReference type="Pfam" id="PF02576">
    <property type="entry name" value="RimP_N"/>
    <property type="match status" value="1"/>
</dbReference>
<dbReference type="SUPFAM" id="SSF75420">
    <property type="entry name" value="YhbC-like, N-terminal domain"/>
    <property type="match status" value="1"/>
</dbReference>
<reference key="1">
    <citation type="journal article" date="1999" name="Nature">
        <title>Genomic sequence comparison of two unrelated isolates of the human gastric pathogen Helicobacter pylori.</title>
        <authorList>
            <person name="Alm R.A."/>
            <person name="Ling L.-S.L."/>
            <person name="Moir D.T."/>
            <person name="King B.L."/>
            <person name="Brown E.D."/>
            <person name="Doig P.C."/>
            <person name="Smith D.R."/>
            <person name="Noonan B."/>
            <person name="Guild B.C."/>
            <person name="deJonge B.L."/>
            <person name="Carmel G."/>
            <person name="Tummino P.J."/>
            <person name="Caruso A."/>
            <person name="Uria-Nickelsen M."/>
            <person name="Mills D.M."/>
            <person name="Ives C."/>
            <person name="Gibson R."/>
            <person name="Merberg D."/>
            <person name="Mills S.D."/>
            <person name="Jiang Q."/>
            <person name="Taylor D.E."/>
            <person name="Vovis G.F."/>
            <person name="Trust T.J."/>
        </authorList>
    </citation>
    <scope>NUCLEOTIDE SEQUENCE [LARGE SCALE GENOMIC DNA]</scope>
    <source>
        <strain>J99 / ATCC 700824</strain>
    </source>
</reference>
<evidence type="ECO:0000255" key="1">
    <source>
        <dbReference type="HAMAP-Rule" id="MF_01077"/>
    </source>
</evidence>